<organism>
    <name type="scientific">Thermoanaerobacter pseudethanolicus (strain ATCC 33223 / 39E)</name>
    <name type="common">Clostridium thermohydrosulfuricum</name>
    <dbReference type="NCBI Taxonomy" id="340099"/>
    <lineage>
        <taxon>Bacteria</taxon>
        <taxon>Bacillati</taxon>
        <taxon>Bacillota</taxon>
        <taxon>Clostridia</taxon>
        <taxon>Thermoanaerobacterales</taxon>
        <taxon>Thermoanaerobacteraceae</taxon>
        <taxon>Thermoanaerobacter</taxon>
    </lineage>
</organism>
<name>EX7L_THEP3</name>
<gene>
    <name evidence="1" type="primary">xseA</name>
    <name type="ordered locus">Teth39_1099</name>
</gene>
<proteinExistence type="inferred from homology"/>
<accession>B0K9E1</accession>
<keyword id="KW-0963">Cytoplasm</keyword>
<keyword id="KW-0269">Exonuclease</keyword>
<keyword id="KW-0378">Hydrolase</keyword>
<keyword id="KW-0540">Nuclease</keyword>
<keyword id="KW-1185">Reference proteome</keyword>
<reference key="1">
    <citation type="submission" date="2008-01" db="EMBL/GenBank/DDBJ databases">
        <title>Complete sequence of Thermoanaerobacter pseudethanolicus 39E.</title>
        <authorList>
            <person name="Copeland A."/>
            <person name="Lucas S."/>
            <person name="Lapidus A."/>
            <person name="Barry K."/>
            <person name="Glavina del Rio T."/>
            <person name="Dalin E."/>
            <person name="Tice H."/>
            <person name="Pitluck S."/>
            <person name="Bruce D."/>
            <person name="Goodwin L."/>
            <person name="Saunders E."/>
            <person name="Brettin T."/>
            <person name="Detter J.C."/>
            <person name="Han C."/>
            <person name="Schmutz J."/>
            <person name="Larimer F."/>
            <person name="Land M."/>
            <person name="Hauser L."/>
            <person name="Kyrpides N."/>
            <person name="Lykidis A."/>
            <person name="Hemme C."/>
            <person name="Fields M.W."/>
            <person name="He Z."/>
            <person name="Zhou J."/>
            <person name="Richardson P."/>
        </authorList>
    </citation>
    <scope>NUCLEOTIDE SEQUENCE [LARGE SCALE GENOMIC DNA]</scope>
    <source>
        <strain>ATCC 33223 / DSM 2355 / 39E</strain>
    </source>
</reference>
<comment type="function">
    <text evidence="1">Bidirectionally degrades single-stranded DNA into large acid-insoluble oligonucleotides, which are then degraded further into small acid-soluble oligonucleotides.</text>
</comment>
<comment type="catalytic activity">
    <reaction evidence="1">
        <text>Exonucleolytic cleavage in either 5'- to 3'- or 3'- to 5'-direction to yield nucleoside 5'-phosphates.</text>
        <dbReference type="EC" id="3.1.11.6"/>
    </reaction>
</comment>
<comment type="subunit">
    <text evidence="1">Heterooligomer composed of large and small subunits.</text>
</comment>
<comment type="subcellular location">
    <subcellularLocation>
        <location evidence="1">Cytoplasm</location>
    </subcellularLocation>
</comment>
<comment type="similarity">
    <text evidence="1">Belongs to the XseA family.</text>
</comment>
<feature type="chain" id="PRO_1000122097" description="Exodeoxyribonuclease 7 large subunit">
    <location>
        <begin position="1"/>
        <end position="401"/>
    </location>
</feature>
<sequence length="401" mass="45483">MQLKALEVREITDYIKKMMDNDIILRNVRVKGEISNLKYHSTGIYFTLKDEIASLKCVMFNEYGKLLNFTLQDGMSVIVTGRISVYERNGTYQLYAQSIQSDGIGALYFAFNKLKEKLQKEGLFDSDKKKPIPKHPKKIAVVTSPTGAVIRDIITISRRRNPTVDILVVPVLVQGSSAADEICNALRILNKREDIDVIILARGGGSLEEIWPFNEEKVARCIYASRIPVVSAVGHETDFTISDFVADLRAPTPSAAAEIVVPDIKVYQRELFLLKTKLLTLMTAELNRKKKEFEGLKRALYLNSPTKKSEILRHKVENLTASLYNEMLSIYQHKRNDFLILAEKLNSLSPLKVLTRGYTIVLDKQEKVISSVKDIKPYDEIKILFKDGKAKAIVQEVKENE</sequence>
<protein>
    <recommendedName>
        <fullName evidence="1">Exodeoxyribonuclease 7 large subunit</fullName>
        <ecNumber evidence="1">3.1.11.6</ecNumber>
    </recommendedName>
    <alternativeName>
        <fullName evidence="1">Exodeoxyribonuclease VII large subunit</fullName>
        <shortName evidence="1">Exonuclease VII large subunit</shortName>
    </alternativeName>
</protein>
<evidence type="ECO:0000255" key="1">
    <source>
        <dbReference type="HAMAP-Rule" id="MF_00378"/>
    </source>
</evidence>
<dbReference type="EC" id="3.1.11.6" evidence="1"/>
<dbReference type="EMBL" id="CP000924">
    <property type="protein sequence ID" value="ABY94754.1"/>
    <property type="molecule type" value="Genomic_DNA"/>
</dbReference>
<dbReference type="RefSeq" id="WP_012269315.1">
    <property type="nucleotide sequence ID" value="NC_010321.1"/>
</dbReference>
<dbReference type="SMR" id="B0K9E1"/>
<dbReference type="STRING" id="340099.Teth39_1099"/>
<dbReference type="KEGG" id="tpd:Teth39_1099"/>
<dbReference type="eggNOG" id="COG1570">
    <property type="taxonomic scope" value="Bacteria"/>
</dbReference>
<dbReference type="HOGENOM" id="CLU_023625_3_1_9"/>
<dbReference type="Proteomes" id="UP000002156">
    <property type="component" value="Chromosome"/>
</dbReference>
<dbReference type="GO" id="GO:0005737">
    <property type="term" value="C:cytoplasm"/>
    <property type="evidence" value="ECO:0007669"/>
    <property type="project" value="UniProtKB-SubCell"/>
</dbReference>
<dbReference type="GO" id="GO:0009318">
    <property type="term" value="C:exodeoxyribonuclease VII complex"/>
    <property type="evidence" value="ECO:0007669"/>
    <property type="project" value="InterPro"/>
</dbReference>
<dbReference type="GO" id="GO:0008855">
    <property type="term" value="F:exodeoxyribonuclease VII activity"/>
    <property type="evidence" value="ECO:0007669"/>
    <property type="project" value="UniProtKB-UniRule"/>
</dbReference>
<dbReference type="GO" id="GO:0003676">
    <property type="term" value="F:nucleic acid binding"/>
    <property type="evidence" value="ECO:0007669"/>
    <property type="project" value="InterPro"/>
</dbReference>
<dbReference type="GO" id="GO:0006308">
    <property type="term" value="P:DNA catabolic process"/>
    <property type="evidence" value="ECO:0007669"/>
    <property type="project" value="UniProtKB-UniRule"/>
</dbReference>
<dbReference type="CDD" id="cd04489">
    <property type="entry name" value="ExoVII_LU_OBF"/>
    <property type="match status" value="1"/>
</dbReference>
<dbReference type="HAMAP" id="MF_00378">
    <property type="entry name" value="Exonuc_7_L"/>
    <property type="match status" value="1"/>
</dbReference>
<dbReference type="InterPro" id="IPR003753">
    <property type="entry name" value="Exonuc_VII_L"/>
</dbReference>
<dbReference type="InterPro" id="IPR020579">
    <property type="entry name" value="Exonuc_VII_lsu_C"/>
</dbReference>
<dbReference type="InterPro" id="IPR012340">
    <property type="entry name" value="NA-bd_OB-fold"/>
</dbReference>
<dbReference type="InterPro" id="IPR025824">
    <property type="entry name" value="OB-fold_nuc-bd_dom"/>
</dbReference>
<dbReference type="NCBIfam" id="TIGR00237">
    <property type="entry name" value="xseA"/>
    <property type="match status" value="1"/>
</dbReference>
<dbReference type="PANTHER" id="PTHR30008">
    <property type="entry name" value="EXODEOXYRIBONUCLEASE 7 LARGE SUBUNIT"/>
    <property type="match status" value="1"/>
</dbReference>
<dbReference type="PANTHER" id="PTHR30008:SF0">
    <property type="entry name" value="EXODEOXYRIBONUCLEASE 7 LARGE SUBUNIT"/>
    <property type="match status" value="1"/>
</dbReference>
<dbReference type="Pfam" id="PF02601">
    <property type="entry name" value="Exonuc_VII_L"/>
    <property type="match status" value="2"/>
</dbReference>
<dbReference type="Pfam" id="PF13742">
    <property type="entry name" value="tRNA_anti_2"/>
    <property type="match status" value="1"/>
</dbReference>
<dbReference type="SUPFAM" id="SSF50249">
    <property type="entry name" value="Nucleic acid-binding proteins"/>
    <property type="match status" value="1"/>
</dbReference>